<feature type="chain" id="PRO_0000068757" description="Putative acetyltransferase MW2476">
    <location>
        <begin position="1"/>
        <end position="199"/>
    </location>
</feature>
<keyword id="KW-0012">Acyltransferase</keyword>
<keyword id="KW-0677">Repeat</keyword>
<keyword id="KW-0808">Transferase</keyword>
<accession>Q8NUR1</accession>
<proteinExistence type="inferred from homology"/>
<comment type="similarity">
    <text evidence="1">Belongs to the transferase hexapeptide repeat family.</text>
</comment>
<gene>
    <name type="ordered locus">MW2476</name>
</gene>
<protein>
    <recommendedName>
        <fullName>Putative acetyltransferase MW2476</fullName>
        <ecNumber>2.3.1.-</ecNumber>
    </recommendedName>
</protein>
<reference key="1">
    <citation type="journal article" date="2002" name="Lancet">
        <title>Genome and virulence determinants of high virulence community-acquired MRSA.</title>
        <authorList>
            <person name="Baba T."/>
            <person name="Takeuchi F."/>
            <person name="Kuroda M."/>
            <person name="Yuzawa H."/>
            <person name="Aoki K."/>
            <person name="Oguchi A."/>
            <person name="Nagai Y."/>
            <person name="Iwama N."/>
            <person name="Asano K."/>
            <person name="Naimi T."/>
            <person name="Kuroda H."/>
            <person name="Cui L."/>
            <person name="Yamamoto K."/>
            <person name="Hiramatsu K."/>
        </authorList>
    </citation>
    <scope>NUCLEOTIDE SEQUENCE [LARGE SCALE GENOMIC DNA]</scope>
    <source>
        <strain>MW2</strain>
    </source>
</reference>
<organism>
    <name type="scientific">Staphylococcus aureus (strain MW2)</name>
    <dbReference type="NCBI Taxonomy" id="196620"/>
    <lineage>
        <taxon>Bacteria</taxon>
        <taxon>Bacillati</taxon>
        <taxon>Bacillota</taxon>
        <taxon>Bacilli</taxon>
        <taxon>Bacillales</taxon>
        <taxon>Staphylococcaceae</taxon>
        <taxon>Staphylococcus</taxon>
    </lineage>
</organism>
<evidence type="ECO:0000305" key="1"/>
<name>ATRF2_STAAW</name>
<dbReference type="EC" id="2.3.1.-"/>
<dbReference type="EMBL" id="BA000033">
    <property type="protein sequence ID" value="BAB96341.1"/>
    <property type="molecule type" value="Genomic_DNA"/>
</dbReference>
<dbReference type="RefSeq" id="WP_000136500.1">
    <property type="nucleotide sequence ID" value="NC_003923.1"/>
</dbReference>
<dbReference type="SMR" id="Q8NUR1"/>
<dbReference type="KEGG" id="sam:MW2476"/>
<dbReference type="HOGENOM" id="CLU_051638_3_0_9"/>
<dbReference type="GO" id="GO:0008870">
    <property type="term" value="F:galactoside O-acetyltransferase activity"/>
    <property type="evidence" value="ECO:0007669"/>
    <property type="project" value="TreeGrafter"/>
</dbReference>
<dbReference type="CDD" id="cd03357">
    <property type="entry name" value="LbH_MAT_GAT"/>
    <property type="match status" value="1"/>
</dbReference>
<dbReference type="FunFam" id="2.160.10.10:FF:000008">
    <property type="entry name" value="Maltose O-acetyltransferase"/>
    <property type="match status" value="1"/>
</dbReference>
<dbReference type="Gene3D" id="2.160.10.10">
    <property type="entry name" value="Hexapeptide repeat proteins"/>
    <property type="match status" value="1"/>
</dbReference>
<dbReference type="InterPro" id="IPR001451">
    <property type="entry name" value="Hexapep"/>
</dbReference>
<dbReference type="InterPro" id="IPR039369">
    <property type="entry name" value="LacA-like"/>
</dbReference>
<dbReference type="InterPro" id="IPR024688">
    <property type="entry name" value="Mac_dom"/>
</dbReference>
<dbReference type="InterPro" id="IPR011004">
    <property type="entry name" value="Trimer_LpxA-like_sf"/>
</dbReference>
<dbReference type="PANTHER" id="PTHR43017:SF1">
    <property type="entry name" value="ACETYLTRANSFERASE YJL218W-RELATED"/>
    <property type="match status" value="1"/>
</dbReference>
<dbReference type="PANTHER" id="PTHR43017">
    <property type="entry name" value="GALACTOSIDE O-ACETYLTRANSFERASE"/>
    <property type="match status" value="1"/>
</dbReference>
<dbReference type="Pfam" id="PF00132">
    <property type="entry name" value="Hexapep"/>
    <property type="match status" value="1"/>
</dbReference>
<dbReference type="Pfam" id="PF14602">
    <property type="entry name" value="Hexapep_2"/>
    <property type="match status" value="1"/>
</dbReference>
<dbReference type="Pfam" id="PF12464">
    <property type="entry name" value="Mac"/>
    <property type="match status" value="1"/>
</dbReference>
<dbReference type="SMART" id="SM01266">
    <property type="entry name" value="Mac"/>
    <property type="match status" value="1"/>
</dbReference>
<dbReference type="SUPFAM" id="SSF51161">
    <property type="entry name" value="Trimeric LpxA-like enzymes"/>
    <property type="match status" value="1"/>
</dbReference>
<sequence length="199" mass="22119">MTEKEKMLAEKWYDANFDQYLINERARAKDICFELNHTRPSATNKRKELIDQLFQTTTDNVSISIPFDTDYGWNVKLGKNVYVNTNCYFMDGGQITIGDNVFIGPNCGFYTATHPLNFHHRNEGFEKAGPIHIGSNTWFGGHVAVLPGVTIGEGSVIGAGSVVTKDIPPHSLAVGNPCKVVRKIDNDLPSETLNDETIK</sequence>